<protein>
    <recommendedName>
        <fullName>Brevinin-1S</fullName>
    </recommendedName>
</protein>
<keyword id="KW-0878">Amphibian defense peptide</keyword>
<keyword id="KW-0044">Antibiotic</keyword>
<keyword id="KW-0929">Antimicrobial</keyword>
<keyword id="KW-0165">Cleavage on pair of basic residues</keyword>
<keyword id="KW-1015">Disulfide bond</keyword>
<keyword id="KW-0964">Secreted</keyword>
<keyword id="KW-0732">Signal</keyword>
<reference key="1">
    <citation type="journal article" date="2006" name="Peptides">
        <title>Amphibian skin peptides and their corresponding cDNAs from singlelyophilized secretion samples: identification of novel brevinins fromthree species of Chinese frogs.</title>
        <authorList>
            <person name="Chen T."/>
            <person name="Li L."/>
            <person name="Zhou M."/>
            <person name="Rao P."/>
            <person name="Walker B."/>
            <person name="Shaw C."/>
        </authorList>
    </citation>
    <scope>NUCLEOTIDE SEQUENCE [MRNA]</scope>
    <source>
        <tissue>Skin</tissue>
    </source>
</reference>
<sequence>MFTLKKSLLLLFFLGTINLSLCEEERNAEEERRDDPEERDVEVEKRFFPAILRVAAKVGPAVLCAITKKC</sequence>
<comment type="function">
    <text evidence="1">Antimicrobial peptide.</text>
</comment>
<comment type="subcellular location">
    <subcellularLocation>
        <location>Secreted</location>
    </subcellularLocation>
</comment>
<comment type="tissue specificity">
    <text>Expressed by the skin glands.</text>
</comment>
<comment type="similarity">
    <text evidence="3">Belongs to the frog skin active peptide (FSAP) family. Brevinin subfamily.</text>
</comment>
<feature type="signal peptide" evidence="2">
    <location>
        <begin position="1"/>
        <end position="22"/>
    </location>
</feature>
<feature type="propeptide" id="PRO_0000268225" evidence="1">
    <location>
        <begin position="23"/>
        <end position="44"/>
    </location>
</feature>
<feature type="peptide" id="PRO_0000268226" description="Brevinin-1S">
    <location>
        <begin position="47"/>
        <end position="70"/>
    </location>
</feature>
<feature type="disulfide bond" evidence="1">
    <location>
        <begin position="64"/>
        <end position="70"/>
    </location>
</feature>
<evidence type="ECO:0000250" key="1"/>
<evidence type="ECO:0000255" key="2"/>
<evidence type="ECO:0000305" key="3"/>
<organism>
    <name type="scientific">Odorrana schmackeri</name>
    <name type="common">Schmacker's frog</name>
    <name type="synonym">Rana schmackeri</name>
    <dbReference type="NCBI Taxonomy" id="110116"/>
    <lineage>
        <taxon>Eukaryota</taxon>
        <taxon>Metazoa</taxon>
        <taxon>Chordata</taxon>
        <taxon>Craniata</taxon>
        <taxon>Vertebrata</taxon>
        <taxon>Euteleostomi</taxon>
        <taxon>Amphibia</taxon>
        <taxon>Batrachia</taxon>
        <taxon>Anura</taxon>
        <taxon>Neobatrachia</taxon>
        <taxon>Ranoidea</taxon>
        <taxon>Ranidae</taxon>
        <taxon>Odorrana</taxon>
    </lineage>
</organism>
<name>BR1_ODOSH</name>
<accession>Q2UXV9</accession>
<dbReference type="EMBL" id="AJ971790">
    <property type="protein sequence ID" value="CAI96773.1"/>
    <property type="molecule type" value="mRNA"/>
</dbReference>
<dbReference type="GO" id="GO:0005576">
    <property type="term" value="C:extracellular region"/>
    <property type="evidence" value="ECO:0007669"/>
    <property type="project" value="UniProtKB-SubCell"/>
</dbReference>
<dbReference type="GO" id="GO:0050829">
    <property type="term" value="P:defense response to Gram-negative bacterium"/>
    <property type="evidence" value="ECO:0007669"/>
    <property type="project" value="UniProtKB-ARBA"/>
</dbReference>
<dbReference type="GO" id="GO:0050830">
    <property type="term" value="P:defense response to Gram-positive bacterium"/>
    <property type="evidence" value="ECO:0007669"/>
    <property type="project" value="UniProtKB-ARBA"/>
</dbReference>
<dbReference type="InterPro" id="IPR012520">
    <property type="entry name" value="Antimicrobial_frog_1"/>
</dbReference>
<dbReference type="InterPro" id="IPR004275">
    <property type="entry name" value="Frog_antimicrobial_propeptide"/>
</dbReference>
<dbReference type="Pfam" id="PF08018">
    <property type="entry name" value="Antimicrobial_1"/>
    <property type="match status" value="1"/>
</dbReference>
<dbReference type="Pfam" id="PF03032">
    <property type="entry name" value="FSAP_sig_propep"/>
    <property type="match status" value="1"/>
</dbReference>
<proteinExistence type="evidence at transcript level"/>